<evidence type="ECO:0000255" key="1">
    <source>
        <dbReference type="HAMAP-Rule" id="MF_00503"/>
    </source>
</evidence>
<evidence type="ECO:0000305" key="2"/>
<sequence>MQIILLDKVANLGSLGDQVNVKSGYARNYLIPQGKAVSATKKNIEFFEARRAELEAKLAETLAAAEARAAKITALGSVTISSKAGDEGKLFGSIGTRDIADAVTAAGVEICKSEVRLPNGVLRTTGDHEVHFQVHSDVFAELNVIIVAE</sequence>
<keyword id="KW-1185">Reference proteome</keyword>
<keyword id="KW-0687">Ribonucleoprotein</keyword>
<keyword id="KW-0689">Ribosomal protein</keyword>
<keyword id="KW-0694">RNA-binding</keyword>
<keyword id="KW-0699">rRNA-binding</keyword>
<gene>
    <name evidence="1" type="primary">rplI</name>
    <name type="ordered locus">PMI3377</name>
</gene>
<protein>
    <recommendedName>
        <fullName evidence="1">Large ribosomal subunit protein bL9</fullName>
    </recommendedName>
    <alternativeName>
        <fullName evidence="2">50S ribosomal protein L9</fullName>
    </alternativeName>
</protein>
<reference key="1">
    <citation type="journal article" date="2008" name="J. Bacteriol.">
        <title>Complete genome sequence of uropathogenic Proteus mirabilis, a master of both adherence and motility.</title>
        <authorList>
            <person name="Pearson M.M."/>
            <person name="Sebaihia M."/>
            <person name="Churcher C."/>
            <person name="Quail M.A."/>
            <person name="Seshasayee A.S."/>
            <person name="Luscombe N.M."/>
            <person name="Abdellah Z."/>
            <person name="Arrosmith C."/>
            <person name="Atkin B."/>
            <person name="Chillingworth T."/>
            <person name="Hauser H."/>
            <person name="Jagels K."/>
            <person name="Moule S."/>
            <person name="Mungall K."/>
            <person name="Norbertczak H."/>
            <person name="Rabbinowitsch E."/>
            <person name="Walker D."/>
            <person name="Whithead S."/>
            <person name="Thomson N.R."/>
            <person name="Rather P.N."/>
            <person name="Parkhill J."/>
            <person name="Mobley H.L.T."/>
        </authorList>
    </citation>
    <scope>NUCLEOTIDE SEQUENCE [LARGE SCALE GENOMIC DNA]</scope>
    <source>
        <strain>HI4320</strain>
    </source>
</reference>
<name>RL9_PROMH</name>
<feature type="chain" id="PRO_1000126955" description="Large ribosomal subunit protein bL9">
    <location>
        <begin position="1"/>
        <end position="149"/>
    </location>
</feature>
<comment type="function">
    <text evidence="1">Binds to the 23S rRNA.</text>
</comment>
<comment type="similarity">
    <text evidence="1">Belongs to the bacterial ribosomal protein bL9 family.</text>
</comment>
<accession>B4F278</accession>
<organism>
    <name type="scientific">Proteus mirabilis (strain HI4320)</name>
    <dbReference type="NCBI Taxonomy" id="529507"/>
    <lineage>
        <taxon>Bacteria</taxon>
        <taxon>Pseudomonadati</taxon>
        <taxon>Pseudomonadota</taxon>
        <taxon>Gammaproteobacteria</taxon>
        <taxon>Enterobacterales</taxon>
        <taxon>Morganellaceae</taxon>
        <taxon>Proteus</taxon>
    </lineage>
</organism>
<proteinExistence type="inferred from homology"/>
<dbReference type="EMBL" id="AM942759">
    <property type="protein sequence ID" value="CAR46620.1"/>
    <property type="molecule type" value="Genomic_DNA"/>
</dbReference>
<dbReference type="RefSeq" id="WP_004246281.1">
    <property type="nucleotide sequence ID" value="NC_010554.1"/>
</dbReference>
<dbReference type="SMR" id="B4F278"/>
<dbReference type="EnsemblBacteria" id="CAR46620">
    <property type="protein sequence ID" value="CAR46620"/>
    <property type="gene ID" value="PMI3377"/>
</dbReference>
<dbReference type="GeneID" id="6800417"/>
<dbReference type="KEGG" id="pmr:PMI3377"/>
<dbReference type="eggNOG" id="COG0359">
    <property type="taxonomic scope" value="Bacteria"/>
</dbReference>
<dbReference type="HOGENOM" id="CLU_078938_4_1_6"/>
<dbReference type="Proteomes" id="UP000008319">
    <property type="component" value="Chromosome"/>
</dbReference>
<dbReference type="GO" id="GO:1990904">
    <property type="term" value="C:ribonucleoprotein complex"/>
    <property type="evidence" value="ECO:0007669"/>
    <property type="project" value="UniProtKB-KW"/>
</dbReference>
<dbReference type="GO" id="GO:0005840">
    <property type="term" value="C:ribosome"/>
    <property type="evidence" value="ECO:0007669"/>
    <property type="project" value="UniProtKB-KW"/>
</dbReference>
<dbReference type="GO" id="GO:0019843">
    <property type="term" value="F:rRNA binding"/>
    <property type="evidence" value="ECO:0007669"/>
    <property type="project" value="UniProtKB-UniRule"/>
</dbReference>
<dbReference type="GO" id="GO:0003735">
    <property type="term" value="F:structural constituent of ribosome"/>
    <property type="evidence" value="ECO:0007669"/>
    <property type="project" value="InterPro"/>
</dbReference>
<dbReference type="GO" id="GO:0006412">
    <property type="term" value="P:translation"/>
    <property type="evidence" value="ECO:0007669"/>
    <property type="project" value="UniProtKB-UniRule"/>
</dbReference>
<dbReference type="FunFam" id="3.10.430.100:FF:000001">
    <property type="entry name" value="50S ribosomal protein L9"/>
    <property type="match status" value="1"/>
</dbReference>
<dbReference type="FunFam" id="3.40.5.10:FF:000001">
    <property type="entry name" value="50S ribosomal protein L9"/>
    <property type="match status" value="1"/>
</dbReference>
<dbReference type="Gene3D" id="3.10.430.100">
    <property type="entry name" value="Ribosomal protein L9, C-terminal domain"/>
    <property type="match status" value="1"/>
</dbReference>
<dbReference type="Gene3D" id="3.40.5.10">
    <property type="entry name" value="Ribosomal protein L9, N-terminal domain"/>
    <property type="match status" value="1"/>
</dbReference>
<dbReference type="HAMAP" id="MF_00503">
    <property type="entry name" value="Ribosomal_bL9"/>
    <property type="match status" value="1"/>
</dbReference>
<dbReference type="InterPro" id="IPR000244">
    <property type="entry name" value="Ribosomal_bL9"/>
</dbReference>
<dbReference type="InterPro" id="IPR009027">
    <property type="entry name" value="Ribosomal_bL9/RNase_H1_N"/>
</dbReference>
<dbReference type="InterPro" id="IPR020594">
    <property type="entry name" value="Ribosomal_bL9_bac/chp"/>
</dbReference>
<dbReference type="InterPro" id="IPR020069">
    <property type="entry name" value="Ribosomal_bL9_C"/>
</dbReference>
<dbReference type="InterPro" id="IPR036791">
    <property type="entry name" value="Ribosomal_bL9_C_sf"/>
</dbReference>
<dbReference type="InterPro" id="IPR020070">
    <property type="entry name" value="Ribosomal_bL9_N"/>
</dbReference>
<dbReference type="InterPro" id="IPR036935">
    <property type="entry name" value="Ribosomal_bL9_N_sf"/>
</dbReference>
<dbReference type="NCBIfam" id="TIGR00158">
    <property type="entry name" value="L9"/>
    <property type="match status" value="1"/>
</dbReference>
<dbReference type="PANTHER" id="PTHR21368">
    <property type="entry name" value="50S RIBOSOMAL PROTEIN L9"/>
    <property type="match status" value="1"/>
</dbReference>
<dbReference type="Pfam" id="PF03948">
    <property type="entry name" value="Ribosomal_L9_C"/>
    <property type="match status" value="1"/>
</dbReference>
<dbReference type="Pfam" id="PF01281">
    <property type="entry name" value="Ribosomal_L9_N"/>
    <property type="match status" value="1"/>
</dbReference>
<dbReference type="SUPFAM" id="SSF55658">
    <property type="entry name" value="L9 N-domain-like"/>
    <property type="match status" value="1"/>
</dbReference>
<dbReference type="SUPFAM" id="SSF55653">
    <property type="entry name" value="Ribosomal protein L9 C-domain"/>
    <property type="match status" value="1"/>
</dbReference>
<dbReference type="PROSITE" id="PS00651">
    <property type="entry name" value="RIBOSOMAL_L9"/>
    <property type="match status" value="1"/>
</dbReference>